<dbReference type="EMBL" id="CR767821">
    <property type="protein sequence ID" value="CAH58334.1"/>
    <property type="molecule type" value="Genomic_DNA"/>
</dbReference>
<dbReference type="EMBL" id="CR925678">
    <property type="protein sequence ID" value="CAI27127.1"/>
    <property type="status" value="ALT_INIT"/>
    <property type="molecule type" value="Genomic_DNA"/>
</dbReference>
<dbReference type="RefSeq" id="WP_011155284.1">
    <property type="nucleotide sequence ID" value="NC_005295.2"/>
</dbReference>
<dbReference type="SMR" id="Q5HAS7"/>
<dbReference type="GeneID" id="33057594"/>
<dbReference type="KEGG" id="eru:Erum6020"/>
<dbReference type="KEGG" id="erw:ERWE_CDS_06330"/>
<dbReference type="eggNOG" id="COG0091">
    <property type="taxonomic scope" value="Bacteria"/>
</dbReference>
<dbReference type="HOGENOM" id="CLU_083987_3_0_5"/>
<dbReference type="Proteomes" id="UP000001021">
    <property type="component" value="Chromosome"/>
</dbReference>
<dbReference type="GO" id="GO:0022625">
    <property type="term" value="C:cytosolic large ribosomal subunit"/>
    <property type="evidence" value="ECO:0007669"/>
    <property type="project" value="TreeGrafter"/>
</dbReference>
<dbReference type="GO" id="GO:0019843">
    <property type="term" value="F:rRNA binding"/>
    <property type="evidence" value="ECO:0007669"/>
    <property type="project" value="UniProtKB-UniRule"/>
</dbReference>
<dbReference type="GO" id="GO:0003735">
    <property type="term" value="F:structural constituent of ribosome"/>
    <property type="evidence" value="ECO:0007669"/>
    <property type="project" value="InterPro"/>
</dbReference>
<dbReference type="GO" id="GO:0006412">
    <property type="term" value="P:translation"/>
    <property type="evidence" value="ECO:0007669"/>
    <property type="project" value="UniProtKB-UniRule"/>
</dbReference>
<dbReference type="CDD" id="cd00336">
    <property type="entry name" value="Ribosomal_L22"/>
    <property type="match status" value="1"/>
</dbReference>
<dbReference type="Gene3D" id="3.90.470.10">
    <property type="entry name" value="Ribosomal protein L22/L17"/>
    <property type="match status" value="1"/>
</dbReference>
<dbReference type="HAMAP" id="MF_01331_B">
    <property type="entry name" value="Ribosomal_uL22_B"/>
    <property type="match status" value="1"/>
</dbReference>
<dbReference type="InterPro" id="IPR001063">
    <property type="entry name" value="Ribosomal_uL22"/>
</dbReference>
<dbReference type="InterPro" id="IPR005727">
    <property type="entry name" value="Ribosomal_uL22_bac/chlpt-type"/>
</dbReference>
<dbReference type="InterPro" id="IPR047867">
    <property type="entry name" value="Ribosomal_uL22_bac/org-type"/>
</dbReference>
<dbReference type="InterPro" id="IPR018260">
    <property type="entry name" value="Ribosomal_uL22_CS"/>
</dbReference>
<dbReference type="InterPro" id="IPR036394">
    <property type="entry name" value="Ribosomal_uL22_sf"/>
</dbReference>
<dbReference type="NCBIfam" id="TIGR01044">
    <property type="entry name" value="rplV_bact"/>
    <property type="match status" value="1"/>
</dbReference>
<dbReference type="PANTHER" id="PTHR13501">
    <property type="entry name" value="CHLOROPLAST 50S RIBOSOMAL PROTEIN L22-RELATED"/>
    <property type="match status" value="1"/>
</dbReference>
<dbReference type="PANTHER" id="PTHR13501:SF8">
    <property type="entry name" value="LARGE RIBOSOMAL SUBUNIT PROTEIN UL22M"/>
    <property type="match status" value="1"/>
</dbReference>
<dbReference type="Pfam" id="PF00237">
    <property type="entry name" value="Ribosomal_L22"/>
    <property type="match status" value="1"/>
</dbReference>
<dbReference type="SUPFAM" id="SSF54843">
    <property type="entry name" value="Ribosomal protein L22"/>
    <property type="match status" value="1"/>
</dbReference>
<dbReference type="PROSITE" id="PS00464">
    <property type="entry name" value="RIBOSOMAL_L22"/>
    <property type="match status" value="1"/>
</dbReference>
<evidence type="ECO:0000255" key="1">
    <source>
        <dbReference type="HAMAP-Rule" id="MF_01331"/>
    </source>
</evidence>
<evidence type="ECO:0000305" key="2"/>
<protein>
    <recommendedName>
        <fullName evidence="1">Large ribosomal subunit protein uL22</fullName>
    </recommendedName>
    <alternativeName>
        <fullName evidence="2">50S ribosomal protein L22</fullName>
    </alternativeName>
</protein>
<proteinExistence type="inferred from homology"/>
<feature type="chain" id="PRO_0000354467" description="Large ribosomal subunit protein uL22">
    <location>
        <begin position="1"/>
        <end position="114"/>
    </location>
</feature>
<gene>
    <name evidence="1" type="primary">rplV</name>
    <name type="ordered locus">Erum6020</name>
    <name type="ordered locus">ERWE_CDS_06330</name>
</gene>
<name>RL22_EHRRW</name>
<reference key="1">
    <citation type="journal article" date="2005" name="Proc. Natl. Acad. Sci. U.S.A.">
        <title>The genome of the heartwater agent Ehrlichia ruminantium contains multiple tandem repeats of actively variable copy number.</title>
        <authorList>
            <person name="Collins N.E."/>
            <person name="Liebenberg J."/>
            <person name="de Villiers E.P."/>
            <person name="Brayton K.A."/>
            <person name="Louw E."/>
            <person name="Pretorius A."/>
            <person name="Faber F.E."/>
            <person name="van Heerden H."/>
            <person name="Josemans A."/>
            <person name="van Kleef M."/>
            <person name="Steyn H.C."/>
            <person name="van Strijp M.F."/>
            <person name="Zweygarth E."/>
            <person name="Jongejan F."/>
            <person name="Maillard J.C."/>
            <person name="Berthier D."/>
            <person name="Botha M."/>
            <person name="Joubert F."/>
            <person name="Corton C.H."/>
            <person name="Thomson N.R."/>
            <person name="Allsopp M.T."/>
            <person name="Allsopp B.A."/>
        </authorList>
    </citation>
    <scope>NUCLEOTIDE SEQUENCE [LARGE SCALE GENOMIC DNA]</scope>
    <source>
        <strain>Welgevonden</strain>
    </source>
</reference>
<reference key="2">
    <citation type="journal article" date="2006" name="J. Bacteriol.">
        <title>Comparative genomic analysis of three strains of Ehrlichia ruminantium reveals an active process of genome size plasticity.</title>
        <authorList>
            <person name="Frutos R."/>
            <person name="Viari A."/>
            <person name="Ferraz C."/>
            <person name="Morgat A."/>
            <person name="Eychenie S."/>
            <person name="Kandassamy Y."/>
            <person name="Chantal I."/>
            <person name="Bensaid A."/>
            <person name="Coissac E."/>
            <person name="Vachiery N."/>
            <person name="Demaille J."/>
            <person name="Martinez D."/>
        </authorList>
    </citation>
    <scope>NUCLEOTIDE SEQUENCE [LARGE SCALE GENOMIC DNA]</scope>
    <source>
        <strain>Welgevonden</strain>
    </source>
</reference>
<accession>Q5HAS7</accession>
<accession>Q5FD63</accession>
<comment type="function">
    <text evidence="1">This protein binds specifically to 23S rRNA; its binding is stimulated by other ribosomal proteins, e.g. L4, L17, and L20. It is important during the early stages of 50S assembly. It makes multiple contacts with different domains of the 23S rRNA in the assembled 50S subunit and ribosome (By similarity).</text>
</comment>
<comment type="function">
    <text evidence="1">The globular domain of the protein is located near the polypeptide exit tunnel on the outside of the subunit, while an extended beta-hairpin is found that lines the wall of the exit tunnel in the center of the 70S ribosome.</text>
</comment>
<comment type="subunit">
    <text evidence="1">Part of the 50S ribosomal subunit.</text>
</comment>
<comment type="similarity">
    <text evidence="1">Belongs to the universal ribosomal protein uL22 family.</text>
</comment>
<comment type="sequence caution" evidence="2">
    <conflict type="erroneous initiation">
        <sequence resource="EMBL-CDS" id="CAI27127"/>
    </conflict>
</comment>
<organism>
    <name type="scientific">Ehrlichia ruminantium (strain Welgevonden)</name>
    <dbReference type="NCBI Taxonomy" id="254945"/>
    <lineage>
        <taxon>Bacteria</taxon>
        <taxon>Pseudomonadati</taxon>
        <taxon>Pseudomonadota</taxon>
        <taxon>Alphaproteobacteria</taxon>
        <taxon>Rickettsiales</taxon>
        <taxon>Anaplasmataceae</taxon>
        <taxon>Ehrlichia</taxon>
    </lineage>
</organism>
<keyword id="KW-0687">Ribonucleoprotein</keyword>
<keyword id="KW-0689">Ribosomal protein</keyword>
<keyword id="KW-0694">RNA-binding</keyword>
<keyword id="KW-0699">rRNA-binding</keyword>
<sequence>MSKVLVEAKGMGLRSTPYKLNLVADLIRGKPVSVAVMYLKFCKKKSARYISKVLKSAIANAQANYSVDVDNLYIKEVLVGKSFSLRRIHARARGKACRVYKHYGNVIIKLFERV</sequence>